<evidence type="ECO:0000255" key="1">
    <source>
        <dbReference type="HAMAP-Rule" id="MF_01552"/>
    </source>
</evidence>
<accession>B7MQV5</accession>
<organism>
    <name type="scientific">Escherichia coli O81 (strain ED1a)</name>
    <dbReference type="NCBI Taxonomy" id="585397"/>
    <lineage>
        <taxon>Bacteria</taxon>
        <taxon>Pseudomonadati</taxon>
        <taxon>Pseudomonadota</taxon>
        <taxon>Gammaproteobacteria</taxon>
        <taxon>Enterobacterales</taxon>
        <taxon>Enterobacteriaceae</taxon>
        <taxon>Escherichia</taxon>
    </lineage>
</organism>
<dbReference type="EC" id="6.3.2.-" evidence="1"/>
<dbReference type="EMBL" id="CU928162">
    <property type="protein sequence ID" value="CAR07021.1"/>
    <property type="molecule type" value="Genomic_DNA"/>
</dbReference>
<dbReference type="RefSeq" id="WP_000684325.1">
    <property type="nucleotide sequence ID" value="NC_011745.1"/>
</dbReference>
<dbReference type="SMR" id="B7MQV5"/>
<dbReference type="KEGG" id="ecq:ECED1_0816"/>
<dbReference type="HOGENOM" id="CLU_054353_0_1_6"/>
<dbReference type="Proteomes" id="UP000000748">
    <property type="component" value="Chromosome"/>
</dbReference>
<dbReference type="GO" id="GO:0005737">
    <property type="term" value="C:cytoplasm"/>
    <property type="evidence" value="ECO:0007669"/>
    <property type="project" value="TreeGrafter"/>
</dbReference>
<dbReference type="GO" id="GO:0005524">
    <property type="term" value="F:ATP binding"/>
    <property type="evidence" value="ECO:0007669"/>
    <property type="project" value="UniProtKB-UniRule"/>
</dbReference>
<dbReference type="GO" id="GO:0046872">
    <property type="term" value="F:metal ion binding"/>
    <property type="evidence" value="ECO:0007669"/>
    <property type="project" value="UniProtKB-KW"/>
</dbReference>
<dbReference type="GO" id="GO:0018169">
    <property type="term" value="F:ribosomal S6-glutamic acid ligase activity"/>
    <property type="evidence" value="ECO:0007669"/>
    <property type="project" value="UniProtKB-UniRule"/>
</dbReference>
<dbReference type="GO" id="GO:0036211">
    <property type="term" value="P:protein modification process"/>
    <property type="evidence" value="ECO:0007669"/>
    <property type="project" value="InterPro"/>
</dbReference>
<dbReference type="GO" id="GO:0009432">
    <property type="term" value="P:SOS response"/>
    <property type="evidence" value="ECO:0007669"/>
    <property type="project" value="TreeGrafter"/>
</dbReference>
<dbReference type="GO" id="GO:0006412">
    <property type="term" value="P:translation"/>
    <property type="evidence" value="ECO:0007669"/>
    <property type="project" value="UniProtKB-KW"/>
</dbReference>
<dbReference type="FunFam" id="3.40.50.20:FF:000004">
    <property type="entry name" value="Probable alpha-L-glutamate ligase"/>
    <property type="match status" value="1"/>
</dbReference>
<dbReference type="FunFam" id="3.30.1490.20:FF:000005">
    <property type="entry name" value="Probable alpha-L-glutamate ligase 1"/>
    <property type="match status" value="1"/>
</dbReference>
<dbReference type="FunFam" id="3.30.470.20:FF:000016">
    <property type="entry name" value="Ribosomal protein S6--L-glutamate ligase"/>
    <property type="match status" value="1"/>
</dbReference>
<dbReference type="Gene3D" id="3.40.50.20">
    <property type="match status" value="1"/>
</dbReference>
<dbReference type="Gene3D" id="3.30.1490.20">
    <property type="entry name" value="ATP-grasp fold, A domain"/>
    <property type="match status" value="1"/>
</dbReference>
<dbReference type="Gene3D" id="3.30.470.20">
    <property type="entry name" value="ATP-grasp fold, B domain"/>
    <property type="match status" value="1"/>
</dbReference>
<dbReference type="HAMAP" id="MF_01552">
    <property type="entry name" value="RimK"/>
    <property type="match status" value="1"/>
</dbReference>
<dbReference type="InterPro" id="IPR011761">
    <property type="entry name" value="ATP-grasp"/>
</dbReference>
<dbReference type="InterPro" id="IPR013651">
    <property type="entry name" value="ATP-grasp_RimK-type"/>
</dbReference>
<dbReference type="InterPro" id="IPR013815">
    <property type="entry name" value="ATP_grasp_subdomain_1"/>
</dbReference>
<dbReference type="InterPro" id="IPR023533">
    <property type="entry name" value="RimK"/>
</dbReference>
<dbReference type="InterPro" id="IPR041107">
    <property type="entry name" value="Rimk_N"/>
</dbReference>
<dbReference type="InterPro" id="IPR004666">
    <property type="entry name" value="Rp_bS6_RimK/Lys_biosynth_LsyX"/>
</dbReference>
<dbReference type="NCBIfam" id="NF007764">
    <property type="entry name" value="PRK10446.1"/>
    <property type="match status" value="1"/>
</dbReference>
<dbReference type="NCBIfam" id="TIGR00768">
    <property type="entry name" value="rimK_fam"/>
    <property type="match status" value="1"/>
</dbReference>
<dbReference type="PANTHER" id="PTHR21621:SF7">
    <property type="entry name" value="RIBOSOMAL PROTEIN BS6--L-GLUTAMATE LIGASE"/>
    <property type="match status" value="1"/>
</dbReference>
<dbReference type="PANTHER" id="PTHR21621">
    <property type="entry name" value="RIBOSOMAL PROTEIN S6 MODIFICATION PROTEIN"/>
    <property type="match status" value="1"/>
</dbReference>
<dbReference type="Pfam" id="PF08443">
    <property type="entry name" value="RimK"/>
    <property type="match status" value="1"/>
</dbReference>
<dbReference type="Pfam" id="PF18030">
    <property type="entry name" value="Rimk_N"/>
    <property type="match status" value="1"/>
</dbReference>
<dbReference type="SUPFAM" id="SSF56059">
    <property type="entry name" value="Glutathione synthetase ATP-binding domain-like"/>
    <property type="match status" value="1"/>
</dbReference>
<dbReference type="PROSITE" id="PS50975">
    <property type="entry name" value="ATP_GRASP"/>
    <property type="match status" value="1"/>
</dbReference>
<comment type="function">
    <text evidence="1">An L-glutamate ligase that catalyzes the ATP-dependent post-translational addition of glutamate residues to the C-terminus of ribosomal protein bS6 (RpsF). Is also able to catalyze the synthesis of poly-alpha-glutamate in vitro, via ATP hydrolysis from unprotected glutamate as substrate. The number of glutamate residues added to either RpsF or to poly-alpha-glutamate changes with pH.</text>
</comment>
<comment type="cofactor">
    <cofactor evidence="1">
        <name>Mg(2+)</name>
        <dbReference type="ChEBI" id="CHEBI:18420"/>
    </cofactor>
    <cofactor evidence="1">
        <name>Mn(2+)</name>
        <dbReference type="ChEBI" id="CHEBI:29035"/>
    </cofactor>
    <text evidence="1">Binds 2 magnesium or manganese ions per subunit.</text>
</comment>
<comment type="similarity">
    <text evidence="1">Belongs to the RimK family.</text>
</comment>
<keyword id="KW-0067">ATP-binding</keyword>
<keyword id="KW-0436">Ligase</keyword>
<keyword id="KW-0460">Magnesium</keyword>
<keyword id="KW-0464">Manganese</keyword>
<keyword id="KW-0479">Metal-binding</keyword>
<keyword id="KW-0547">Nucleotide-binding</keyword>
<keyword id="KW-0648">Protein biosynthesis</keyword>
<name>RIMK_ECO81</name>
<protein>
    <recommendedName>
        <fullName evidence="1">Ribosomal protein bS6--L-glutamate ligase</fullName>
        <ecNumber evidence="1">6.3.2.-</ecNumber>
    </recommendedName>
    <alternativeName>
        <fullName evidence="1">Poly-alpha-glutamate synthase</fullName>
    </alternativeName>
    <alternativeName>
        <fullName evidence="1">Ribosomal protein bS6 modification protein</fullName>
    </alternativeName>
</protein>
<feature type="chain" id="PRO_1000185325" description="Ribosomal protein bS6--L-glutamate ligase">
    <location>
        <begin position="1"/>
        <end position="300"/>
    </location>
</feature>
<feature type="domain" description="ATP-grasp" evidence="1">
    <location>
        <begin position="104"/>
        <end position="287"/>
    </location>
</feature>
<feature type="binding site" evidence="1">
    <location>
        <position position="141"/>
    </location>
    <ligand>
        <name>ATP</name>
        <dbReference type="ChEBI" id="CHEBI:30616"/>
    </ligand>
</feature>
<feature type="binding site" evidence="1">
    <location>
        <begin position="178"/>
        <end position="179"/>
    </location>
    <ligand>
        <name>ATP</name>
        <dbReference type="ChEBI" id="CHEBI:30616"/>
    </ligand>
</feature>
<feature type="binding site" evidence="1">
    <location>
        <position position="187"/>
    </location>
    <ligand>
        <name>ATP</name>
        <dbReference type="ChEBI" id="CHEBI:30616"/>
    </ligand>
</feature>
<feature type="binding site" evidence="1">
    <location>
        <begin position="211"/>
        <end position="213"/>
    </location>
    <ligand>
        <name>ATP</name>
        <dbReference type="ChEBI" id="CHEBI:30616"/>
    </ligand>
</feature>
<feature type="binding site" evidence="1">
    <location>
        <position position="248"/>
    </location>
    <ligand>
        <name>Mg(2+)</name>
        <dbReference type="ChEBI" id="CHEBI:18420"/>
        <label>1</label>
    </ligand>
</feature>
<feature type="binding site" evidence="1">
    <location>
        <position position="248"/>
    </location>
    <ligand>
        <name>Mn(2+)</name>
        <dbReference type="ChEBI" id="CHEBI:29035"/>
        <label>1</label>
    </ligand>
</feature>
<feature type="binding site" evidence="1">
    <location>
        <position position="260"/>
    </location>
    <ligand>
        <name>Mg(2+)</name>
        <dbReference type="ChEBI" id="CHEBI:18420"/>
        <label>1</label>
    </ligand>
</feature>
<feature type="binding site" evidence="1">
    <location>
        <position position="260"/>
    </location>
    <ligand>
        <name>Mg(2+)</name>
        <dbReference type="ChEBI" id="CHEBI:18420"/>
        <label>2</label>
    </ligand>
</feature>
<feature type="binding site" evidence="1">
    <location>
        <position position="260"/>
    </location>
    <ligand>
        <name>Mn(2+)</name>
        <dbReference type="ChEBI" id="CHEBI:29035"/>
        <label>1</label>
    </ligand>
</feature>
<feature type="binding site" evidence="1">
    <location>
        <position position="260"/>
    </location>
    <ligand>
        <name>Mn(2+)</name>
        <dbReference type="ChEBI" id="CHEBI:29035"/>
        <label>2</label>
    </ligand>
</feature>
<feature type="binding site" evidence="1">
    <location>
        <position position="262"/>
    </location>
    <ligand>
        <name>Mg(2+)</name>
        <dbReference type="ChEBI" id="CHEBI:18420"/>
        <label>2</label>
    </ligand>
</feature>
<feature type="binding site" evidence="1">
    <location>
        <position position="262"/>
    </location>
    <ligand>
        <name>Mn(2+)</name>
        <dbReference type="ChEBI" id="CHEBI:29035"/>
        <label>2</label>
    </ligand>
</feature>
<reference key="1">
    <citation type="journal article" date="2009" name="PLoS Genet.">
        <title>Organised genome dynamics in the Escherichia coli species results in highly diverse adaptive paths.</title>
        <authorList>
            <person name="Touchon M."/>
            <person name="Hoede C."/>
            <person name="Tenaillon O."/>
            <person name="Barbe V."/>
            <person name="Baeriswyl S."/>
            <person name="Bidet P."/>
            <person name="Bingen E."/>
            <person name="Bonacorsi S."/>
            <person name="Bouchier C."/>
            <person name="Bouvet O."/>
            <person name="Calteau A."/>
            <person name="Chiapello H."/>
            <person name="Clermont O."/>
            <person name="Cruveiller S."/>
            <person name="Danchin A."/>
            <person name="Diard M."/>
            <person name="Dossat C."/>
            <person name="Karoui M.E."/>
            <person name="Frapy E."/>
            <person name="Garry L."/>
            <person name="Ghigo J.M."/>
            <person name="Gilles A.M."/>
            <person name="Johnson J."/>
            <person name="Le Bouguenec C."/>
            <person name="Lescat M."/>
            <person name="Mangenot S."/>
            <person name="Martinez-Jehanne V."/>
            <person name="Matic I."/>
            <person name="Nassif X."/>
            <person name="Oztas S."/>
            <person name="Petit M.A."/>
            <person name="Pichon C."/>
            <person name="Rouy Z."/>
            <person name="Ruf C.S."/>
            <person name="Schneider D."/>
            <person name="Tourret J."/>
            <person name="Vacherie B."/>
            <person name="Vallenet D."/>
            <person name="Medigue C."/>
            <person name="Rocha E.P.C."/>
            <person name="Denamur E."/>
        </authorList>
    </citation>
    <scope>NUCLEOTIDE SEQUENCE [LARGE SCALE GENOMIC DNA]</scope>
    <source>
        <strain>ED1a</strain>
    </source>
</reference>
<sequence length="300" mass="32467">MKIAILSRDGTLYSCKRLREAAIQRGHLVEILDPLSCYMNINPAASSIHYKGRKLPHFDAVIPRIGTAITFYGTAALRQFEMLGSYPLNESVAIARARDKLRSMQLLARQGIDLPVTGIAHSPDDTSDLIDMVGGAPLVVKLVEGTQGIGVVLAETRQAAESVIDAFRGLNAHILVQEYIKEAQGCDIRCLVVGDEVVAAIERRAKEGDFRSNLHRGGAASVASITPQEREIAIKAARTMALDVAGVDILRANRGPLVMEVNASPGLEGIEKTTGIDIASKMIRWIERHATTEYCLKTGG</sequence>
<gene>
    <name evidence="1" type="primary">rimK</name>
    <name type="ordered locus">ECED1_0816</name>
</gene>
<proteinExistence type="inferred from homology"/>